<sequence length="61" mass="7229">MTFINNDAYSTLGINSFDISKKFISKILIIVINKNTILRYLWSVSEYSVHPRIFYQSLFHQ</sequence>
<reference key="1">
    <citation type="journal article" date="1990" name="Virology">
        <title>The complete DNA sequence of vaccinia virus.</title>
        <authorList>
            <person name="Goebel S.J."/>
            <person name="Johnson G.P."/>
            <person name="Perkus M.E."/>
            <person name="Davis S.W."/>
            <person name="Winslow J.P."/>
            <person name="Paoletti E."/>
        </authorList>
    </citation>
    <scope>NUCLEOTIDE SEQUENCE [LARGE SCALE GENOMIC DNA]</scope>
</reference>
<reference key="2">
    <citation type="journal article" date="1990" name="Virology">
        <title>Appendix to 'The complete DNA sequence of vaccinia virus'.</title>
        <authorList>
            <person name="Goebel S.J."/>
            <person name="Johnson G.P."/>
            <person name="Perkus M.E."/>
            <person name="Davis S.W."/>
            <person name="Winslow J.P."/>
            <person name="Paoletti E."/>
        </authorList>
    </citation>
    <scope>COMPLETE GENOME</scope>
</reference>
<dbReference type="EMBL" id="M35027">
    <property type="status" value="NOT_ANNOTATED_CDS"/>
    <property type="molecule type" value="Genomic_DNA"/>
</dbReference>
<dbReference type="Proteomes" id="UP000008269">
    <property type="component" value="Segment"/>
</dbReference>
<accession>P68487</accession>
<accession>P04316</accession>
<keyword id="KW-1185">Reference proteome</keyword>
<protein>
    <recommendedName>
        <fullName>Uncharacterized 7.2 kDa protein</fullName>
    </recommendedName>
</protein>
<gene>
    <name type="ORF">D ORF H</name>
</gene>
<feature type="chain" id="PRO_0000099698" description="Uncharacterized 7.2 kDa protein">
    <location>
        <begin position="1"/>
        <end position="61"/>
    </location>
</feature>
<organismHost>
    <name type="scientific">Homo sapiens</name>
    <name type="common">Human</name>
    <dbReference type="NCBI Taxonomy" id="9606"/>
</organismHost>
<organism>
    <name type="scientific">Vaccinia virus (strain Copenhagen)</name>
    <name type="common">VACV</name>
    <dbReference type="NCBI Taxonomy" id="10249"/>
    <lineage>
        <taxon>Viruses</taxon>
        <taxon>Varidnaviria</taxon>
        <taxon>Bamfordvirae</taxon>
        <taxon>Nucleocytoviricota</taxon>
        <taxon>Pokkesviricetes</taxon>
        <taxon>Chitovirales</taxon>
        <taxon>Poxviridae</taxon>
        <taxon>Chordopoxvirinae</taxon>
        <taxon>Orthopoxvirus</taxon>
        <taxon>Vaccinia virus</taxon>
    </lineage>
</organism>
<name>YVDH_VACCC</name>
<proteinExistence type="predicted"/>